<gene>
    <name type="primary">pkaC</name>
    <name type="synonym">PK2</name>
    <name type="synonym">PK3</name>
    <name type="ORF">DDB_G0283907</name>
</gene>
<feature type="chain" id="PRO_0000086068" description="cAMP-dependent protein kinase catalytic subunit">
    <location>
        <begin position="1"/>
        <end position="648"/>
    </location>
</feature>
<feature type="domain" description="Protein kinase" evidence="2">
    <location>
        <begin position="336"/>
        <end position="590"/>
    </location>
</feature>
<feature type="domain" description="AGC-kinase C-terminal" evidence="3">
    <location>
        <begin position="591"/>
        <end position="648"/>
    </location>
</feature>
<feature type="region of interest" description="Disordered" evidence="5">
    <location>
        <begin position="1"/>
        <end position="25"/>
    </location>
</feature>
<feature type="region of interest" description="Disordered" evidence="5">
    <location>
        <begin position="40"/>
        <end position="86"/>
    </location>
</feature>
<feature type="region of interest" description="Disordered" evidence="5">
    <location>
        <begin position="121"/>
        <end position="175"/>
    </location>
</feature>
<feature type="region of interest" description="Disordered" evidence="5">
    <location>
        <begin position="219"/>
        <end position="290"/>
    </location>
</feature>
<feature type="compositionally biased region" description="Low complexity" evidence="5">
    <location>
        <begin position="1"/>
        <end position="20"/>
    </location>
</feature>
<feature type="compositionally biased region" description="Low complexity" evidence="5">
    <location>
        <begin position="46"/>
        <end position="67"/>
    </location>
</feature>
<feature type="compositionally biased region" description="Low complexity" evidence="5">
    <location>
        <begin position="136"/>
        <end position="175"/>
    </location>
</feature>
<feature type="compositionally biased region" description="Low complexity" evidence="5">
    <location>
        <begin position="232"/>
        <end position="254"/>
    </location>
</feature>
<feature type="compositionally biased region" description="Polar residues" evidence="5">
    <location>
        <begin position="255"/>
        <end position="290"/>
    </location>
</feature>
<feature type="active site" description="Proton acceptor" evidence="2 4">
    <location>
        <position position="459"/>
    </location>
</feature>
<feature type="binding site" evidence="2">
    <location>
        <begin position="342"/>
        <end position="350"/>
    </location>
    <ligand>
        <name>ATP</name>
        <dbReference type="ChEBI" id="CHEBI:30616"/>
    </ligand>
</feature>
<feature type="binding site" evidence="2">
    <location>
        <position position="365"/>
    </location>
    <ligand>
        <name>ATP</name>
        <dbReference type="ChEBI" id="CHEBI:30616"/>
    </ligand>
</feature>
<feature type="modified residue" description="Phosphothreonine" evidence="1">
    <location>
        <position position="490"/>
    </location>
</feature>
<feature type="sequence conflict" description="In Ref. 1; M38703." evidence="6" ref="1">
    <original>I</original>
    <variation>L</variation>
    <location>
        <position position="342"/>
    </location>
</feature>
<evidence type="ECO:0000250" key="1"/>
<evidence type="ECO:0000255" key="2">
    <source>
        <dbReference type="PROSITE-ProRule" id="PRU00159"/>
    </source>
</evidence>
<evidence type="ECO:0000255" key="3">
    <source>
        <dbReference type="PROSITE-ProRule" id="PRU00618"/>
    </source>
</evidence>
<evidence type="ECO:0000255" key="4">
    <source>
        <dbReference type="PROSITE-ProRule" id="PRU10027"/>
    </source>
</evidence>
<evidence type="ECO:0000256" key="5">
    <source>
        <dbReference type="SAM" id="MobiDB-lite"/>
    </source>
</evidence>
<evidence type="ECO:0000305" key="6"/>
<accession>P34099</accession>
<accession>Q54QA9</accession>
<reference key="1">
    <citation type="journal article" date="1991" name="Gene">
        <title>Isolation of two genes encoding putative protein kinases regulated during Dictyostelium discoideum development.</title>
        <authorList>
            <person name="Buerki E."/>
            <person name="Anjard C."/>
            <person name="Scholder J.-C."/>
            <person name="Reymond C.D."/>
        </authorList>
    </citation>
    <scope>NUCLEOTIDE SEQUENCE [GENOMIC DNA]</scope>
    <source>
        <strain>AX3</strain>
    </source>
</reference>
<reference key="2">
    <citation type="journal article" date="2005" name="Nature">
        <title>The genome of the social amoeba Dictyostelium discoideum.</title>
        <authorList>
            <person name="Eichinger L."/>
            <person name="Pachebat J.A."/>
            <person name="Gloeckner G."/>
            <person name="Rajandream M.A."/>
            <person name="Sucgang R."/>
            <person name="Berriman M."/>
            <person name="Song J."/>
            <person name="Olsen R."/>
            <person name="Szafranski K."/>
            <person name="Xu Q."/>
            <person name="Tunggal B."/>
            <person name="Kummerfeld S."/>
            <person name="Madera M."/>
            <person name="Konfortov B.A."/>
            <person name="Rivero F."/>
            <person name="Bankier A.T."/>
            <person name="Lehmann R."/>
            <person name="Hamlin N."/>
            <person name="Davies R."/>
            <person name="Gaudet P."/>
            <person name="Fey P."/>
            <person name="Pilcher K."/>
            <person name="Chen G."/>
            <person name="Saunders D."/>
            <person name="Sodergren E.J."/>
            <person name="Davis P."/>
            <person name="Kerhornou A."/>
            <person name="Nie X."/>
            <person name="Hall N."/>
            <person name="Anjard C."/>
            <person name="Hemphill L."/>
            <person name="Bason N."/>
            <person name="Farbrother P."/>
            <person name="Desany B."/>
            <person name="Just E."/>
            <person name="Morio T."/>
            <person name="Rost R."/>
            <person name="Churcher C.M."/>
            <person name="Cooper J."/>
            <person name="Haydock S."/>
            <person name="van Driessche N."/>
            <person name="Cronin A."/>
            <person name="Goodhead I."/>
            <person name="Muzny D.M."/>
            <person name="Mourier T."/>
            <person name="Pain A."/>
            <person name="Lu M."/>
            <person name="Harper D."/>
            <person name="Lindsay R."/>
            <person name="Hauser H."/>
            <person name="James K.D."/>
            <person name="Quiles M."/>
            <person name="Madan Babu M."/>
            <person name="Saito T."/>
            <person name="Buchrieser C."/>
            <person name="Wardroper A."/>
            <person name="Felder M."/>
            <person name="Thangavelu M."/>
            <person name="Johnson D."/>
            <person name="Knights A."/>
            <person name="Loulseged H."/>
            <person name="Mungall K.L."/>
            <person name="Oliver K."/>
            <person name="Price C."/>
            <person name="Quail M.A."/>
            <person name="Urushihara H."/>
            <person name="Hernandez J."/>
            <person name="Rabbinowitsch E."/>
            <person name="Steffen D."/>
            <person name="Sanders M."/>
            <person name="Ma J."/>
            <person name="Kohara Y."/>
            <person name="Sharp S."/>
            <person name="Simmonds M.N."/>
            <person name="Spiegler S."/>
            <person name="Tivey A."/>
            <person name="Sugano S."/>
            <person name="White B."/>
            <person name="Walker D."/>
            <person name="Woodward J.R."/>
            <person name="Winckler T."/>
            <person name="Tanaka Y."/>
            <person name="Shaulsky G."/>
            <person name="Schleicher M."/>
            <person name="Weinstock G.M."/>
            <person name="Rosenthal A."/>
            <person name="Cox E.C."/>
            <person name="Chisholm R.L."/>
            <person name="Gibbs R.A."/>
            <person name="Loomis W.F."/>
            <person name="Platzer M."/>
            <person name="Kay R.R."/>
            <person name="Williams J.G."/>
            <person name="Dear P.H."/>
            <person name="Noegel A.A."/>
            <person name="Barrell B.G."/>
            <person name="Kuspa A."/>
        </authorList>
    </citation>
    <scope>NUCLEOTIDE SEQUENCE [LARGE SCALE GENOMIC DNA]</scope>
    <source>
        <strain>AX4</strain>
    </source>
</reference>
<reference key="3">
    <citation type="journal article" date="1993" name="Biochemistry">
        <title>An unusual catalytic subunit for the cAMP-dependent protein kinase of Dictyostelium discoideum.</title>
        <authorList>
            <person name="Anjard C."/>
            <person name="Etchebehere L."/>
            <person name="Pinaud S."/>
            <person name="Veron M."/>
            <person name="Reymond C.D."/>
        </authorList>
    </citation>
    <scope>CHARACTERIZATION</scope>
</reference>
<reference key="4">
    <citation type="journal article" date="1992" name="Proc. Natl. Acad. Sci. U.S.A.">
        <title>DdPK3, which plays essential roles during Dictyostelium development, encodes the catalytic subunit of cAMP-dependent protein kinase.</title>
        <authorList>
            <person name="Mann S.K.O."/>
            <person name="Yonemoto W.M."/>
            <person name="Taylor S.S."/>
            <person name="Firtel R.A."/>
        </authorList>
    </citation>
    <scope>CHARACTERIZATION</scope>
    <source>
        <strain>AX3</strain>
    </source>
</reference>
<dbReference type="EC" id="2.7.11.11"/>
<dbReference type="EMBL" id="M38703">
    <property type="status" value="NOT_ANNOTATED_CDS"/>
    <property type="molecule type" value="Genomic_DNA"/>
</dbReference>
<dbReference type="EMBL" id="AAFI02000058">
    <property type="protein sequence ID" value="EAL65441.1"/>
    <property type="molecule type" value="Genomic_DNA"/>
</dbReference>
<dbReference type="PIR" id="JQ1150">
    <property type="entry name" value="JQ1150"/>
</dbReference>
<dbReference type="RefSeq" id="XP_638835.1">
    <property type="nucleotide sequence ID" value="XM_633743.1"/>
</dbReference>
<dbReference type="SMR" id="P34099"/>
<dbReference type="FunCoup" id="P34099">
    <property type="interactions" value="1"/>
</dbReference>
<dbReference type="STRING" id="44689.P34099"/>
<dbReference type="PaxDb" id="44689-DDB0215408"/>
<dbReference type="EnsemblProtists" id="EAL65441">
    <property type="protein sequence ID" value="EAL65441"/>
    <property type="gene ID" value="DDB_G0283907"/>
</dbReference>
<dbReference type="GeneID" id="8624359"/>
<dbReference type="KEGG" id="ddi:DDB_G0283907"/>
<dbReference type="dictyBase" id="DDB_G0283907">
    <property type="gene designation" value="pkaC"/>
</dbReference>
<dbReference type="VEuPathDB" id="AmoebaDB:DDB_G0283907"/>
<dbReference type="eggNOG" id="KOG0616">
    <property type="taxonomic scope" value="Eukaryota"/>
</dbReference>
<dbReference type="HOGENOM" id="CLU_000288_63_5_1"/>
<dbReference type="InParanoid" id="P34099"/>
<dbReference type="OMA" id="HSPTHFQ"/>
<dbReference type="PhylomeDB" id="P34099"/>
<dbReference type="BRENDA" id="2.7.11.11">
    <property type="organism ID" value="1939"/>
</dbReference>
<dbReference type="PRO" id="PR:P34099"/>
<dbReference type="Proteomes" id="UP000002195">
    <property type="component" value="Chromosome 4"/>
</dbReference>
<dbReference type="GO" id="GO:0005952">
    <property type="term" value="C:cAMP-dependent protein kinase complex"/>
    <property type="evidence" value="ECO:0000314"/>
    <property type="project" value="dictyBase"/>
</dbReference>
<dbReference type="GO" id="GO:0005813">
    <property type="term" value="C:centrosome"/>
    <property type="evidence" value="ECO:0000304"/>
    <property type="project" value="dictyBase"/>
</dbReference>
<dbReference type="GO" id="GO:0005829">
    <property type="term" value="C:cytosol"/>
    <property type="evidence" value="ECO:0000318"/>
    <property type="project" value="GO_Central"/>
</dbReference>
<dbReference type="GO" id="GO:0005524">
    <property type="term" value="F:ATP binding"/>
    <property type="evidence" value="ECO:0000305"/>
    <property type="project" value="dictyBase"/>
</dbReference>
<dbReference type="GO" id="GO:0004691">
    <property type="term" value="F:cAMP-dependent protein kinase activity"/>
    <property type="evidence" value="ECO:0000314"/>
    <property type="project" value="dictyBase"/>
</dbReference>
<dbReference type="GO" id="GO:0034237">
    <property type="term" value="F:protein kinase A regulatory subunit binding"/>
    <property type="evidence" value="ECO:0000353"/>
    <property type="project" value="dictyBase"/>
</dbReference>
<dbReference type="GO" id="GO:0004860">
    <property type="term" value="F:protein kinase inhibitor activity"/>
    <property type="evidence" value="ECO:0000315"/>
    <property type="project" value="dictyBase"/>
</dbReference>
<dbReference type="GO" id="GO:0019887">
    <property type="term" value="F:protein kinase regulator activity"/>
    <property type="evidence" value="ECO:0000314"/>
    <property type="project" value="dictyBase"/>
</dbReference>
<dbReference type="GO" id="GO:0106310">
    <property type="term" value="F:protein serine kinase activity"/>
    <property type="evidence" value="ECO:0000314"/>
    <property type="project" value="dictyBase"/>
</dbReference>
<dbReference type="GO" id="GO:0140582">
    <property type="term" value="P:adenylate cyclase-activating G protein-coupled cAMP receptor signaling pathway"/>
    <property type="evidence" value="ECO:0000315"/>
    <property type="project" value="dictyBase"/>
</dbReference>
<dbReference type="GO" id="GO:0061939">
    <property type="term" value="P:c-di-GMP signaling"/>
    <property type="evidence" value="ECO:0000315"/>
    <property type="project" value="dictyBase"/>
</dbReference>
<dbReference type="GO" id="GO:0043327">
    <property type="term" value="P:chemotaxis to cAMP"/>
    <property type="evidence" value="ECO:0000315"/>
    <property type="project" value="dictyBase"/>
</dbReference>
<dbReference type="GO" id="GO:0031154">
    <property type="term" value="P:culmination involved in sorocarp development"/>
    <property type="evidence" value="ECO:0000315"/>
    <property type="project" value="dictyBase"/>
</dbReference>
<dbReference type="GO" id="GO:0071964">
    <property type="term" value="P:establishment of cell polarity regulating cell shape"/>
    <property type="evidence" value="ECO:0000315"/>
    <property type="project" value="dictyBase"/>
</dbReference>
<dbReference type="GO" id="GO:0140986">
    <property type="term" value="P:G protein-coupled chemorepellent receptor signaling pathway"/>
    <property type="evidence" value="ECO:0000315"/>
    <property type="project" value="dictyBase"/>
</dbReference>
<dbReference type="GO" id="GO:0000165">
    <property type="term" value="P:MAPK cascade"/>
    <property type="evidence" value="ECO:0000315"/>
    <property type="project" value="dictyBase"/>
</dbReference>
<dbReference type="GO" id="GO:0010629">
    <property type="term" value="P:negative regulation of gene expression"/>
    <property type="evidence" value="ECO:0000315"/>
    <property type="project" value="dictyBase"/>
</dbReference>
<dbReference type="GO" id="GO:0140676">
    <property type="term" value="P:oscillatory cAMP signaling"/>
    <property type="evidence" value="ECO:0000314"/>
    <property type="project" value="dictyBase"/>
</dbReference>
<dbReference type="GO" id="GO:0010628">
    <property type="term" value="P:positive regulation of gene expression"/>
    <property type="evidence" value="ECO:0000314"/>
    <property type="project" value="dictyBase"/>
</dbReference>
<dbReference type="GO" id="GO:0010737">
    <property type="term" value="P:protein kinase A signaling"/>
    <property type="evidence" value="ECO:0000315"/>
    <property type="project" value="dictyBase"/>
</dbReference>
<dbReference type="GO" id="GO:0006355">
    <property type="term" value="P:regulation of DNA-templated transcription"/>
    <property type="evidence" value="ECO:0000314"/>
    <property type="project" value="dictyBase"/>
</dbReference>
<dbReference type="GO" id="GO:1905301">
    <property type="term" value="P:regulation of macropinocytosis"/>
    <property type="evidence" value="ECO:0000315"/>
    <property type="project" value="dictyBase"/>
</dbReference>
<dbReference type="GO" id="GO:1901261">
    <property type="term" value="P:regulation of sorocarp spore cell differentiation"/>
    <property type="evidence" value="ECO:0000315"/>
    <property type="project" value="dictyBase"/>
</dbReference>
<dbReference type="GO" id="GO:0031285">
    <property type="term" value="P:regulation of sorocarp stalk cell differentiation"/>
    <property type="evidence" value="ECO:0000315"/>
    <property type="project" value="dictyBase"/>
</dbReference>
<dbReference type="GO" id="GO:0042173">
    <property type="term" value="P:regulation of sporulation resulting in formation of a cellular spore"/>
    <property type="evidence" value="ECO:0000315"/>
    <property type="project" value="dictyBase"/>
</dbReference>
<dbReference type="GO" id="GO:1904643">
    <property type="term" value="P:response to curcumin"/>
    <property type="evidence" value="ECO:0000314"/>
    <property type="project" value="dictyBase"/>
</dbReference>
<dbReference type="GO" id="GO:0007165">
    <property type="term" value="P:signal transduction"/>
    <property type="evidence" value="ECO:0000316"/>
    <property type="project" value="dictyBase"/>
</dbReference>
<dbReference type="GO" id="GO:0007264">
    <property type="term" value="P:small GTPase-mediated signal transduction"/>
    <property type="evidence" value="ECO:0000315"/>
    <property type="project" value="dictyBase"/>
</dbReference>
<dbReference type="GO" id="GO:0031288">
    <property type="term" value="P:sorocarp morphogenesis"/>
    <property type="evidence" value="ECO:0000315"/>
    <property type="project" value="dictyBase"/>
</dbReference>
<dbReference type="GO" id="GO:0044671">
    <property type="term" value="P:sorocarp spore cell differentiation"/>
    <property type="evidence" value="ECO:0000315"/>
    <property type="project" value="dictyBase"/>
</dbReference>
<dbReference type="GO" id="GO:0030435">
    <property type="term" value="P:sporulation resulting in formation of a cellular spore"/>
    <property type="evidence" value="ECO:0000315"/>
    <property type="project" value="dictyBase"/>
</dbReference>
<dbReference type="CDD" id="cd05580">
    <property type="entry name" value="STKc_PKA_like"/>
    <property type="match status" value="1"/>
</dbReference>
<dbReference type="FunFam" id="3.30.200.20:FF:000042">
    <property type="entry name" value="Aurora kinase A"/>
    <property type="match status" value="1"/>
</dbReference>
<dbReference type="FunFam" id="1.10.510.10:FF:000005">
    <property type="entry name" value="cAMP-dependent protein kinase catalytic subunit alpha"/>
    <property type="match status" value="1"/>
</dbReference>
<dbReference type="Gene3D" id="3.30.200.20">
    <property type="entry name" value="Phosphorylase Kinase, domain 1"/>
    <property type="match status" value="1"/>
</dbReference>
<dbReference type="Gene3D" id="1.10.510.10">
    <property type="entry name" value="Transferase(Phosphotransferase) domain 1"/>
    <property type="match status" value="1"/>
</dbReference>
<dbReference type="InterPro" id="IPR000961">
    <property type="entry name" value="AGC-kinase_C"/>
</dbReference>
<dbReference type="InterPro" id="IPR011009">
    <property type="entry name" value="Kinase-like_dom_sf"/>
</dbReference>
<dbReference type="InterPro" id="IPR000719">
    <property type="entry name" value="Prot_kinase_dom"/>
</dbReference>
<dbReference type="InterPro" id="IPR017441">
    <property type="entry name" value="Protein_kinase_ATP_BS"/>
</dbReference>
<dbReference type="InterPro" id="IPR008271">
    <property type="entry name" value="Ser/Thr_kinase_AS"/>
</dbReference>
<dbReference type="PANTHER" id="PTHR24353:SF37">
    <property type="entry name" value="CAMP-DEPENDENT PROTEIN KINASE CATALYTIC SUBUNIT PRKX"/>
    <property type="match status" value="1"/>
</dbReference>
<dbReference type="PANTHER" id="PTHR24353">
    <property type="entry name" value="CYCLIC NUCLEOTIDE-DEPENDENT PROTEIN KINASE"/>
    <property type="match status" value="1"/>
</dbReference>
<dbReference type="Pfam" id="PF00069">
    <property type="entry name" value="Pkinase"/>
    <property type="match status" value="1"/>
</dbReference>
<dbReference type="SMART" id="SM00133">
    <property type="entry name" value="S_TK_X"/>
    <property type="match status" value="1"/>
</dbReference>
<dbReference type="SMART" id="SM00220">
    <property type="entry name" value="S_TKc"/>
    <property type="match status" value="1"/>
</dbReference>
<dbReference type="SUPFAM" id="SSF56112">
    <property type="entry name" value="Protein kinase-like (PK-like)"/>
    <property type="match status" value="1"/>
</dbReference>
<dbReference type="PROSITE" id="PS51285">
    <property type="entry name" value="AGC_KINASE_CTER"/>
    <property type="match status" value="1"/>
</dbReference>
<dbReference type="PROSITE" id="PS00107">
    <property type="entry name" value="PROTEIN_KINASE_ATP"/>
    <property type="match status" value="1"/>
</dbReference>
<dbReference type="PROSITE" id="PS50011">
    <property type="entry name" value="PROTEIN_KINASE_DOM"/>
    <property type="match status" value="1"/>
</dbReference>
<dbReference type="PROSITE" id="PS00108">
    <property type="entry name" value="PROTEIN_KINASE_ST"/>
    <property type="match status" value="1"/>
</dbReference>
<comment type="function">
    <text>Essential for differentiation and fruit morphogenesis.</text>
</comment>
<comment type="catalytic activity">
    <reaction>
        <text>L-seryl-[protein] + ATP = O-phospho-L-seryl-[protein] + ADP + H(+)</text>
        <dbReference type="Rhea" id="RHEA:17989"/>
        <dbReference type="Rhea" id="RHEA-COMP:9863"/>
        <dbReference type="Rhea" id="RHEA-COMP:11604"/>
        <dbReference type="ChEBI" id="CHEBI:15378"/>
        <dbReference type="ChEBI" id="CHEBI:29999"/>
        <dbReference type="ChEBI" id="CHEBI:30616"/>
        <dbReference type="ChEBI" id="CHEBI:83421"/>
        <dbReference type="ChEBI" id="CHEBI:456216"/>
        <dbReference type="EC" id="2.7.11.11"/>
    </reaction>
</comment>
<comment type="catalytic activity">
    <reaction>
        <text>L-threonyl-[protein] + ATP = O-phospho-L-threonyl-[protein] + ADP + H(+)</text>
        <dbReference type="Rhea" id="RHEA:46608"/>
        <dbReference type="Rhea" id="RHEA-COMP:11060"/>
        <dbReference type="Rhea" id="RHEA-COMP:11605"/>
        <dbReference type="ChEBI" id="CHEBI:15378"/>
        <dbReference type="ChEBI" id="CHEBI:30013"/>
        <dbReference type="ChEBI" id="CHEBI:30616"/>
        <dbReference type="ChEBI" id="CHEBI:61977"/>
        <dbReference type="ChEBI" id="CHEBI:456216"/>
        <dbReference type="EC" id="2.7.11.11"/>
    </reaction>
</comment>
<comment type="subunit">
    <text>In Dictyostelium the holoenzyme is a dimer composed of a regulatory (R) and a catalytic (C) subunit. In the presence of cAMP it dissociates into the active C subunit and an R monomer.</text>
</comment>
<comment type="developmental stage">
    <text>CAPK activity is low in vegetatively growing amoebae, increases during development of aggregation and reaches a maximum at culmination.</text>
</comment>
<comment type="similarity">
    <text evidence="6">Belongs to the protein kinase superfamily. AGC Ser/Thr protein kinase family. cAMP subfamily.</text>
</comment>
<protein>
    <recommendedName>
        <fullName>cAMP-dependent protein kinase catalytic subunit</fullName>
        <ecNumber>2.7.11.11</ecNumber>
    </recommendedName>
    <alternativeName>
        <fullName>Dd GPK2</fullName>
    </alternativeName>
    <alternativeName>
        <fullName>DdPK3</fullName>
    </alternativeName>
</protein>
<name>KAPC_DICDI</name>
<organism>
    <name type="scientific">Dictyostelium discoideum</name>
    <name type="common">Social amoeba</name>
    <dbReference type="NCBI Taxonomy" id="44689"/>
    <lineage>
        <taxon>Eukaryota</taxon>
        <taxon>Amoebozoa</taxon>
        <taxon>Evosea</taxon>
        <taxon>Eumycetozoa</taxon>
        <taxon>Dictyostelia</taxon>
        <taxon>Dictyosteliales</taxon>
        <taxon>Dictyosteliaceae</taxon>
        <taxon>Dictyostelium</taxon>
    </lineage>
</organism>
<keyword id="KW-0067">ATP-binding</keyword>
<keyword id="KW-0114">cAMP</keyword>
<keyword id="KW-0418">Kinase</keyword>
<keyword id="KW-0547">Nucleotide-binding</keyword>
<keyword id="KW-0597">Phosphoprotein</keyword>
<keyword id="KW-1185">Reference proteome</keyword>
<keyword id="KW-0723">Serine/threonine-protein kinase</keyword>
<keyword id="KW-0808">Transferase</keyword>
<proteinExistence type="evidence at protein level"/>
<sequence>MSNSNNNSSSGNHNSTTINNPKVNVYSNIPNSTTYTYGSGGGGTLSGNNTNNNNTNNNNNNNNNSSGDNKNHSPVTSATDRLTKMDIEEKWDNKNYEKDEREKSPLFHILASNLNSFGNFKVPSTFSLTPPEPNKQQQPQQQPQQQQPQQQQPQQQQPQQQQQQQPQQQQQPQQQLQQNNQQQQQQLQQQQLQQQLQQQQQQQQQQQQQQQQKQQKQQQQQQQHLHQDGIVNTPSTTQTSTTTTTTTTTTNPHTSGLSLQHAHSSYTPSNVLHSPTHFQSSLPTRLDTNPITTPIRQQQQSQQQLQQQQLQQIPPPTVNSFFLPPPVNARERLKEFKQIRVIGTGTFGKVYLIQNTKDGCYYAMKCLNKAYVVQLKQVEHLNSEKSILSSIHHPFIVNLYQAFQDEKKLYLLFEYVAGGEVFTHLRKSMKFSNSTAKFYAAEIVLALEFLHKQNIVYRDLKPENLLIDNQGHIKITDFGFAKRVEDRTFTLCGTPEYLAPEIIQSKGHGKAVDWWALGILIFEMLAGYPPFYDDDTFAIYNKILAGRITFPLGFDVDAKDLIKRLLTADRTRRLGALKDGALDVKNHRWFSDINWERLYQRRDNGPFIPKIQHQGDSSNFEMYDEEEMVEEPPSSNYVDPYAHLFKDF</sequence>